<protein>
    <recommendedName>
        <fullName evidence="1">UPF0301 protein Bpet0561</fullName>
    </recommendedName>
</protein>
<gene>
    <name type="ordered locus">Bpet0561</name>
</gene>
<organism>
    <name type="scientific">Bordetella petrii (strain ATCC BAA-461 / DSM 12804 / CCUG 43448)</name>
    <dbReference type="NCBI Taxonomy" id="340100"/>
    <lineage>
        <taxon>Bacteria</taxon>
        <taxon>Pseudomonadati</taxon>
        <taxon>Pseudomonadota</taxon>
        <taxon>Betaproteobacteria</taxon>
        <taxon>Burkholderiales</taxon>
        <taxon>Alcaligenaceae</taxon>
        <taxon>Bordetella</taxon>
    </lineage>
</organism>
<feature type="chain" id="PRO_1000148377" description="UPF0301 protein Bpet0561">
    <location>
        <begin position="1"/>
        <end position="201"/>
    </location>
</feature>
<dbReference type="EMBL" id="AM902716">
    <property type="protein sequence ID" value="CAP40893.1"/>
    <property type="molecule type" value="Genomic_DNA"/>
</dbReference>
<dbReference type="SMR" id="A9I1S7"/>
<dbReference type="STRING" id="94624.Bpet0561"/>
<dbReference type="KEGG" id="bpt:Bpet0561"/>
<dbReference type="eggNOG" id="COG1678">
    <property type="taxonomic scope" value="Bacteria"/>
</dbReference>
<dbReference type="Proteomes" id="UP000001225">
    <property type="component" value="Chromosome"/>
</dbReference>
<dbReference type="GO" id="GO:0005829">
    <property type="term" value="C:cytosol"/>
    <property type="evidence" value="ECO:0007669"/>
    <property type="project" value="TreeGrafter"/>
</dbReference>
<dbReference type="Gene3D" id="3.40.1740.10">
    <property type="entry name" value="VC0467-like"/>
    <property type="match status" value="1"/>
</dbReference>
<dbReference type="HAMAP" id="MF_00758">
    <property type="entry name" value="UPF0301"/>
    <property type="match status" value="1"/>
</dbReference>
<dbReference type="InterPro" id="IPR003774">
    <property type="entry name" value="AlgH-like"/>
</dbReference>
<dbReference type="NCBIfam" id="NF001266">
    <property type="entry name" value="PRK00228.1-1"/>
    <property type="match status" value="1"/>
</dbReference>
<dbReference type="NCBIfam" id="NF001267">
    <property type="entry name" value="PRK00228.1-2"/>
    <property type="match status" value="1"/>
</dbReference>
<dbReference type="PANTHER" id="PTHR30327">
    <property type="entry name" value="UNCHARACTERIZED PROTEIN YQGE"/>
    <property type="match status" value="1"/>
</dbReference>
<dbReference type="PANTHER" id="PTHR30327:SF1">
    <property type="entry name" value="UPF0301 PROTEIN YQGE"/>
    <property type="match status" value="1"/>
</dbReference>
<dbReference type="Pfam" id="PF02622">
    <property type="entry name" value="DUF179"/>
    <property type="match status" value="1"/>
</dbReference>
<dbReference type="SUPFAM" id="SSF143456">
    <property type="entry name" value="VC0467-like"/>
    <property type="match status" value="1"/>
</dbReference>
<comment type="similarity">
    <text evidence="1">Belongs to the UPF0301 (AlgH) family.</text>
</comment>
<proteinExistence type="inferred from homology"/>
<name>Y561_BORPD</name>
<sequence length="201" mass="21300">MTDQNHDTQADDDANDAPATDFSNQFLIAMPQMVEGSLAGSVIYVCEHTTRGALGLVINRPTDLTLESLFERIDLTLEIRPVKDSPVFFGGPVQTDRGFVLHAPAGDYSSSIKLGDLALTTSRDVLQAVADGNGPARMLVTLGYAGWGAGQLESEMAQNAWLTVGADADIIFDVPPEDRYPAALKLLGIDPVMLSGGAGHA</sequence>
<reference key="1">
    <citation type="journal article" date="2008" name="BMC Genomics">
        <title>The missing link: Bordetella petrii is endowed with both the metabolic versatility of environmental bacteria and virulence traits of pathogenic Bordetellae.</title>
        <authorList>
            <person name="Gross R."/>
            <person name="Guzman C.A."/>
            <person name="Sebaihia M."/>
            <person name="Martin dos Santos V.A.P."/>
            <person name="Pieper D.H."/>
            <person name="Koebnik R."/>
            <person name="Lechner M."/>
            <person name="Bartels D."/>
            <person name="Buhrmester J."/>
            <person name="Choudhuri J.V."/>
            <person name="Ebensen T."/>
            <person name="Gaigalat L."/>
            <person name="Herrmann S."/>
            <person name="Khachane A.N."/>
            <person name="Larisch C."/>
            <person name="Link S."/>
            <person name="Linke B."/>
            <person name="Meyer F."/>
            <person name="Mormann S."/>
            <person name="Nakunst D."/>
            <person name="Rueckert C."/>
            <person name="Schneiker-Bekel S."/>
            <person name="Schulze K."/>
            <person name="Voerholter F.-J."/>
            <person name="Yevsa T."/>
            <person name="Engle J.T."/>
            <person name="Goldman W.E."/>
            <person name="Puehler A."/>
            <person name="Goebel U.B."/>
            <person name="Goesmann A."/>
            <person name="Bloecker H."/>
            <person name="Kaiser O."/>
            <person name="Martinez-Arias R."/>
        </authorList>
    </citation>
    <scope>NUCLEOTIDE SEQUENCE [LARGE SCALE GENOMIC DNA]</scope>
    <source>
        <strain>ATCC BAA-461 / DSM 12804 / CCUG 43448</strain>
    </source>
</reference>
<accession>A9I1S7</accession>
<evidence type="ECO:0000255" key="1">
    <source>
        <dbReference type="HAMAP-Rule" id="MF_00758"/>
    </source>
</evidence>